<proteinExistence type="inferred from homology"/>
<feature type="chain" id="PRO_1000142113" description="Large ribosomal subunit protein uL4">
    <location>
        <begin position="1"/>
        <end position="206"/>
    </location>
</feature>
<name>RL4_DESAL</name>
<gene>
    <name evidence="1" type="primary">rplD</name>
    <name type="ordered locus">Dalk_1914</name>
</gene>
<comment type="function">
    <text evidence="1">One of the primary rRNA binding proteins, this protein initially binds near the 5'-end of the 23S rRNA. It is important during the early stages of 50S assembly. It makes multiple contacts with different domains of the 23S rRNA in the assembled 50S subunit and ribosome.</text>
</comment>
<comment type="function">
    <text evidence="1">Forms part of the polypeptide exit tunnel.</text>
</comment>
<comment type="subunit">
    <text evidence="1">Part of the 50S ribosomal subunit.</text>
</comment>
<comment type="similarity">
    <text evidence="1">Belongs to the universal ribosomal protein uL4 family.</text>
</comment>
<reference key="1">
    <citation type="journal article" date="2012" name="Environ. Microbiol.">
        <title>The genome sequence of Desulfatibacillum alkenivorans AK-01: a blueprint for anaerobic alkane oxidation.</title>
        <authorList>
            <person name="Callaghan A.V."/>
            <person name="Morris B.E."/>
            <person name="Pereira I.A."/>
            <person name="McInerney M.J."/>
            <person name="Austin R.N."/>
            <person name="Groves J.T."/>
            <person name="Kukor J.J."/>
            <person name="Suflita J.M."/>
            <person name="Young L.Y."/>
            <person name="Zylstra G.J."/>
            <person name="Wawrik B."/>
        </authorList>
    </citation>
    <scope>NUCLEOTIDE SEQUENCE [LARGE SCALE GENOMIC DNA]</scope>
    <source>
        <strain>AK-01</strain>
    </source>
</reference>
<accession>B8FET4</accession>
<evidence type="ECO:0000255" key="1">
    <source>
        <dbReference type="HAMAP-Rule" id="MF_01328"/>
    </source>
</evidence>
<evidence type="ECO:0000305" key="2"/>
<dbReference type="EMBL" id="CP001322">
    <property type="protein sequence ID" value="ACL03611.1"/>
    <property type="molecule type" value="Genomic_DNA"/>
</dbReference>
<dbReference type="RefSeq" id="WP_012611042.1">
    <property type="nucleotide sequence ID" value="NC_011768.1"/>
</dbReference>
<dbReference type="SMR" id="B8FET4"/>
<dbReference type="KEGG" id="dal:Dalk_1914"/>
<dbReference type="eggNOG" id="COG0088">
    <property type="taxonomic scope" value="Bacteria"/>
</dbReference>
<dbReference type="HOGENOM" id="CLU_041575_5_2_7"/>
<dbReference type="Proteomes" id="UP000000739">
    <property type="component" value="Chromosome"/>
</dbReference>
<dbReference type="GO" id="GO:1990904">
    <property type="term" value="C:ribonucleoprotein complex"/>
    <property type="evidence" value="ECO:0007669"/>
    <property type="project" value="UniProtKB-KW"/>
</dbReference>
<dbReference type="GO" id="GO:0005840">
    <property type="term" value="C:ribosome"/>
    <property type="evidence" value="ECO:0007669"/>
    <property type="project" value="UniProtKB-KW"/>
</dbReference>
<dbReference type="GO" id="GO:0019843">
    <property type="term" value="F:rRNA binding"/>
    <property type="evidence" value="ECO:0007669"/>
    <property type="project" value="UniProtKB-UniRule"/>
</dbReference>
<dbReference type="GO" id="GO:0003735">
    <property type="term" value="F:structural constituent of ribosome"/>
    <property type="evidence" value="ECO:0007669"/>
    <property type="project" value="InterPro"/>
</dbReference>
<dbReference type="GO" id="GO:0006412">
    <property type="term" value="P:translation"/>
    <property type="evidence" value="ECO:0007669"/>
    <property type="project" value="UniProtKB-UniRule"/>
</dbReference>
<dbReference type="Gene3D" id="3.40.1370.10">
    <property type="match status" value="1"/>
</dbReference>
<dbReference type="HAMAP" id="MF_01328_B">
    <property type="entry name" value="Ribosomal_uL4_B"/>
    <property type="match status" value="1"/>
</dbReference>
<dbReference type="InterPro" id="IPR002136">
    <property type="entry name" value="Ribosomal_uL4"/>
</dbReference>
<dbReference type="InterPro" id="IPR013005">
    <property type="entry name" value="Ribosomal_uL4-like"/>
</dbReference>
<dbReference type="InterPro" id="IPR023574">
    <property type="entry name" value="Ribosomal_uL4_dom_sf"/>
</dbReference>
<dbReference type="NCBIfam" id="TIGR03953">
    <property type="entry name" value="rplD_bact"/>
    <property type="match status" value="1"/>
</dbReference>
<dbReference type="PANTHER" id="PTHR10746">
    <property type="entry name" value="50S RIBOSOMAL PROTEIN L4"/>
    <property type="match status" value="1"/>
</dbReference>
<dbReference type="PANTHER" id="PTHR10746:SF6">
    <property type="entry name" value="LARGE RIBOSOMAL SUBUNIT PROTEIN UL4M"/>
    <property type="match status" value="1"/>
</dbReference>
<dbReference type="Pfam" id="PF00573">
    <property type="entry name" value="Ribosomal_L4"/>
    <property type="match status" value="1"/>
</dbReference>
<dbReference type="SUPFAM" id="SSF52166">
    <property type="entry name" value="Ribosomal protein L4"/>
    <property type="match status" value="1"/>
</dbReference>
<protein>
    <recommendedName>
        <fullName evidence="1">Large ribosomal subunit protein uL4</fullName>
    </recommendedName>
    <alternativeName>
        <fullName evidence="2">50S ribosomal protein L4</fullName>
    </alternativeName>
</protein>
<sequence>MAKVEVCNMSGEKVSEIDLADEIFGVEVKGSVLHEVVVMQLANRRAGTVCVKNRSDVRGSTRKLYRQKGTGRARKGDIKSPVLRGGGVVFGPHPRDYSYKVPKKVRKAALKMALSSKLADNSLKVVDNMDLPEIKTKAFAEAMAAMGVDTALIVTTGEEKNLELSARNVKGVKVMPTAGLNVYDILKYGNLILAQGAIEAIEGRLL</sequence>
<organism>
    <name type="scientific">Desulfatibacillum aliphaticivorans</name>
    <dbReference type="NCBI Taxonomy" id="218208"/>
    <lineage>
        <taxon>Bacteria</taxon>
        <taxon>Pseudomonadati</taxon>
        <taxon>Thermodesulfobacteriota</taxon>
        <taxon>Desulfobacteria</taxon>
        <taxon>Desulfobacterales</taxon>
        <taxon>Desulfatibacillaceae</taxon>
        <taxon>Desulfatibacillum</taxon>
    </lineage>
</organism>
<keyword id="KW-1185">Reference proteome</keyword>
<keyword id="KW-0687">Ribonucleoprotein</keyword>
<keyword id="KW-0689">Ribosomal protein</keyword>
<keyword id="KW-0694">RNA-binding</keyword>
<keyword id="KW-0699">rRNA-binding</keyword>